<comment type="similarity">
    <text evidence="1">Belongs to the bacterial ribosomal protein bL28 family.</text>
</comment>
<evidence type="ECO:0000255" key="1">
    <source>
        <dbReference type="HAMAP-Rule" id="MF_00373"/>
    </source>
</evidence>
<evidence type="ECO:0000305" key="2"/>
<proteinExistence type="inferred from homology"/>
<name>RL28_STRPI</name>
<sequence length="62" mass="6884">MAKVCYFTGRKTVSGNNRSHAMNQTKRAVKPNLQKVTVLIDGKPKKVWASARALKSGKVERV</sequence>
<organism>
    <name type="scientific">Streptococcus pneumoniae (strain Hungary19A-6)</name>
    <dbReference type="NCBI Taxonomy" id="487214"/>
    <lineage>
        <taxon>Bacteria</taxon>
        <taxon>Bacillati</taxon>
        <taxon>Bacillota</taxon>
        <taxon>Bacilli</taxon>
        <taxon>Lactobacillales</taxon>
        <taxon>Streptococcaceae</taxon>
        <taxon>Streptococcus</taxon>
    </lineage>
</organism>
<gene>
    <name evidence="1" type="primary">rpmB</name>
    <name type="ordered locus">SPH_0548</name>
</gene>
<protein>
    <recommendedName>
        <fullName evidence="1">Large ribosomal subunit protein bL28</fullName>
    </recommendedName>
    <alternativeName>
        <fullName evidence="2">50S ribosomal protein L28</fullName>
    </alternativeName>
</protein>
<keyword id="KW-0687">Ribonucleoprotein</keyword>
<keyword id="KW-0689">Ribosomal protein</keyword>
<feature type="chain" id="PRO_1000121695" description="Large ribosomal subunit protein bL28">
    <location>
        <begin position="1"/>
        <end position="62"/>
    </location>
</feature>
<reference key="1">
    <citation type="journal article" date="2010" name="Genome Biol.">
        <title>Structure and dynamics of the pan-genome of Streptococcus pneumoniae and closely related species.</title>
        <authorList>
            <person name="Donati C."/>
            <person name="Hiller N.L."/>
            <person name="Tettelin H."/>
            <person name="Muzzi A."/>
            <person name="Croucher N.J."/>
            <person name="Angiuoli S.V."/>
            <person name="Oggioni M."/>
            <person name="Dunning Hotopp J.C."/>
            <person name="Hu F.Z."/>
            <person name="Riley D.R."/>
            <person name="Covacci A."/>
            <person name="Mitchell T.J."/>
            <person name="Bentley S.D."/>
            <person name="Kilian M."/>
            <person name="Ehrlich G.D."/>
            <person name="Rappuoli R."/>
            <person name="Moxon E.R."/>
            <person name="Masignani V."/>
        </authorList>
    </citation>
    <scope>NUCLEOTIDE SEQUENCE [LARGE SCALE GENOMIC DNA]</scope>
    <source>
        <strain>Hungary19A-6</strain>
    </source>
</reference>
<accession>B1I9N1</accession>
<dbReference type="EMBL" id="CP000936">
    <property type="protein sequence ID" value="ACA37130.1"/>
    <property type="molecule type" value="Genomic_DNA"/>
</dbReference>
<dbReference type="RefSeq" id="WP_001140948.1">
    <property type="nucleotide sequence ID" value="NC_010380.1"/>
</dbReference>
<dbReference type="SMR" id="B1I9N1"/>
<dbReference type="GeneID" id="93921138"/>
<dbReference type="KEGG" id="spv:SPH_0548"/>
<dbReference type="HOGENOM" id="CLU_064548_7_1_9"/>
<dbReference type="Proteomes" id="UP000002163">
    <property type="component" value="Chromosome"/>
</dbReference>
<dbReference type="GO" id="GO:1990904">
    <property type="term" value="C:ribonucleoprotein complex"/>
    <property type="evidence" value="ECO:0007669"/>
    <property type="project" value="UniProtKB-KW"/>
</dbReference>
<dbReference type="GO" id="GO:0005840">
    <property type="term" value="C:ribosome"/>
    <property type="evidence" value="ECO:0007669"/>
    <property type="project" value="UniProtKB-KW"/>
</dbReference>
<dbReference type="GO" id="GO:0003735">
    <property type="term" value="F:structural constituent of ribosome"/>
    <property type="evidence" value="ECO:0007669"/>
    <property type="project" value="InterPro"/>
</dbReference>
<dbReference type="GO" id="GO:0006412">
    <property type="term" value="P:translation"/>
    <property type="evidence" value="ECO:0007669"/>
    <property type="project" value="UniProtKB-UniRule"/>
</dbReference>
<dbReference type="Gene3D" id="2.30.170.40">
    <property type="entry name" value="Ribosomal protein L28/L24"/>
    <property type="match status" value="1"/>
</dbReference>
<dbReference type="HAMAP" id="MF_00373">
    <property type="entry name" value="Ribosomal_bL28"/>
    <property type="match status" value="1"/>
</dbReference>
<dbReference type="InterPro" id="IPR050096">
    <property type="entry name" value="Bacterial_rp_bL28"/>
</dbReference>
<dbReference type="InterPro" id="IPR026569">
    <property type="entry name" value="Ribosomal_bL28"/>
</dbReference>
<dbReference type="InterPro" id="IPR034704">
    <property type="entry name" value="Ribosomal_bL28/bL31-like_sf"/>
</dbReference>
<dbReference type="InterPro" id="IPR001383">
    <property type="entry name" value="Ribosomal_bL28_bact-type"/>
</dbReference>
<dbReference type="InterPro" id="IPR037147">
    <property type="entry name" value="Ribosomal_bL28_sf"/>
</dbReference>
<dbReference type="NCBIfam" id="TIGR00009">
    <property type="entry name" value="L28"/>
    <property type="match status" value="1"/>
</dbReference>
<dbReference type="PANTHER" id="PTHR39080">
    <property type="entry name" value="50S RIBOSOMAL PROTEIN L28"/>
    <property type="match status" value="1"/>
</dbReference>
<dbReference type="PANTHER" id="PTHR39080:SF1">
    <property type="entry name" value="LARGE RIBOSOMAL SUBUNIT PROTEIN BL28A"/>
    <property type="match status" value="1"/>
</dbReference>
<dbReference type="Pfam" id="PF00830">
    <property type="entry name" value="Ribosomal_L28"/>
    <property type="match status" value="1"/>
</dbReference>
<dbReference type="SUPFAM" id="SSF143800">
    <property type="entry name" value="L28p-like"/>
    <property type="match status" value="1"/>
</dbReference>